<sequence length="70" mass="7679">MAFLKKSLFLVLFLALVPLSICEEEKREGENEKEQEDDNQSEEKRGLVSDLLSTVTGLLGNLGGGGLKKI</sequence>
<reference key="1">
    <citation type="journal article" date="2006" name="Biochemistry">
        <title>Dermaseptin S9, an alpha-helical antimicrobial peptide with a hydrophobic core and cationic termini.</title>
        <authorList>
            <person name="Lequin O."/>
            <person name="Ladram A."/>
            <person name="Chabbert L."/>
            <person name="Bruston F."/>
            <person name="Convert O."/>
            <person name="Vanhoye D."/>
            <person name="Chassaing G."/>
            <person name="Nicolas P."/>
            <person name="Amiche M."/>
        </authorList>
    </citation>
    <scope>NUCLEOTIDE SEQUENCE [MRNA]</scope>
    <source>
        <tissue>Skin</tissue>
    </source>
</reference>
<reference key="2">
    <citation type="journal article" date="2008" name="Peptides">
        <title>A consistent nomenclature of antimicrobial peptides isolated from frogs of the subfamily Phyllomedusinae.</title>
        <authorList>
            <person name="Amiche M."/>
            <person name="Ladram A."/>
            <person name="Nicolas P."/>
        </authorList>
    </citation>
    <scope>NOMENCLATURE</scope>
</reference>
<proteinExistence type="inferred from homology"/>
<name>PTC1_PHYSA</name>
<keyword id="KW-0165">Cleavage on pair of basic residues</keyword>
<keyword id="KW-0964">Secreted</keyword>
<keyword id="KW-0732">Signal</keyword>
<dbReference type="EMBL" id="AJ972906">
    <property type="protein sequence ID" value="CAI99865.1"/>
    <property type="molecule type" value="mRNA"/>
</dbReference>
<dbReference type="GO" id="GO:0005576">
    <property type="term" value="C:extracellular region"/>
    <property type="evidence" value="ECO:0007669"/>
    <property type="project" value="UniProtKB-SubCell"/>
</dbReference>
<dbReference type="InterPro" id="IPR004275">
    <property type="entry name" value="Frog_antimicrobial_propeptide"/>
</dbReference>
<dbReference type="InterPro" id="IPR016322">
    <property type="entry name" value="FSAP"/>
</dbReference>
<dbReference type="Pfam" id="PF03032">
    <property type="entry name" value="FSAP_sig_propep"/>
    <property type="match status" value="1"/>
</dbReference>
<dbReference type="PIRSF" id="PIRSF001822">
    <property type="entry name" value="Dermaseptin_precursor"/>
    <property type="match status" value="1"/>
</dbReference>
<evidence type="ECO:0000250" key="1">
    <source>
        <dbReference type="UniProtKB" id="Q800R4"/>
    </source>
</evidence>
<evidence type="ECO:0000255" key="2"/>
<evidence type="ECO:0000256" key="3">
    <source>
        <dbReference type="SAM" id="MobiDB-lite"/>
    </source>
</evidence>
<evidence type="ECO:0000303" key="4">
    <source>
    </source>
</evidence>
<evidence type="ECO:0000303" key="5">
    <source>
    </source>
</evidence>
<evidence type="ECO:0000305" key="6"/>
<evidence type="ECO:0000305" key="7">
    <source>
    </source>
</evidence>
<comment type="function">
    <text evidence="1">The native peptide is a cationic amphipathic alpha-helical antimicrobial peptide with potent activity against both Gram-positive and Gram-negative bacteria (By similarity). It has weak activity against fungi and shows low hemolytic activity (By similarity).</text>
</comment>
<comment type="subcellular location">
    <subcellularLocation>
        <location evidence="7">Secreted</location>
    </subcellularLocation>
</comment>
<comment type="tissue specificity">
    <text evidence="7">Expressed by the skin glands.</text>
</comment>
<comment type="domain">
    <text evidence="6">Plasticins have huge conformational plasticity. They can display random coil, alpha-helical, beta-sheet or beta-harpin structures.</text>
</comment>
<comment type="similarity">
    <text evidence="6">Belongs to the frog skin active peptide (FSAP) family. Plasticin subfamily.</text>
</comment>
<comment type="online information" name="The antimicrobial peptide database">
    <link uri="https://wangapd3.com/database/query_output.php?ID=0910"/>
</comment>
<accession>Q1EN14</accession>
<feature type="signal peptide" evidence="2">
    <location>
        <begin position="1"/>
        <end position="22"/>
    </location>
</feature>
<feature type="propeptide" id="PRO_0000449898" evidence="7">
    <location>
        <begin position="23"/>
        <end position="45"/>
    </location>
</feature>
<feature type="peptide" id="PRO_5004188490" description="Plasticin-S1" evidence="7">
    <location>
        <begin position="46"/>
        <end position="70"/>
    </location>
</feature>
<feature type="region of interest" description="Disordered" evidence="3">
    <location>
        <begin position="25"/>
        <end position="45"/>
    </location>
</feature>
<protein>
    <recommendedName>
        <fullName evidence="5">Plasticin-S1</fullName>
        <shortName evidence="5">PTC-S1</shortName>
    </recommendedName>
    <alternativeName>
        <fullName evidence="4">Dermaseptin-S10</fullName>
        <shortName evidence="4">DRS-S10</shortName>
    </alternativeName>
</protein>
<organism>
    <name type="scientific">Phyllomedusa sauvagei</name>
    <name type="common">Sauvage's leaf frog</name>
    <dbReference type="NCBI Taxonomy" id="8395"/>
    <lineage>
        <taxon>Eukaryota</taxon>
        <taxon>Metazoa</taxon>
        <taxon>Chordata</taxon>
        <taxon>Craniata</taxon>
        <taxon>Vertebrata</taxon>
        <taxon>Euteleostomi</taxon>
        <taxon>Amphibia</taxon>
        <taxon>Batrachia</taxon>
        <taxon>Anura</taxon>
        <taxon>Neobatrachia</taxon>
        <taxon>Hyloidea</taxon>
        <taxon>Hylidae</taxon>
        <taxon>Phyllomedusinae</taxon>
        <taxon>Phyllomedusa</taxon>
    </lineage>
</organism>